<gene>
    <name type="primary">RPS12</name>
</gene>
<dbReference type="EMBL" id="M57904">
    <property type="protein sequence ID" value="AAA70314.1"/>
    <property type="molecule type" value="Genomic_DNA"/>
</dbReference>
<dbReference type="EMBL" id="D32052">
    <property type="protein sequence ID" value="BAA06831.1"/>
    <property type="molecule type" value="Genomic_DNA"/>
</dbReference>
<dbReference type="EMBL" id="D21251">
    <property type="protein sequence ID" value="BAA04795.1"/>
    <property type="molecule type" value="Genomic_DNA"/>
</dbReference>
<dbReference type="EMBL" id="BA000029">
    <property type="status" value="NOT_ANNOTATED_CDS"/>
    <property type="molecule type" value="Genomic_DNA"/>
</dbReference>
<dbReference type="PIR" id="S17913">
    <property type="entry name" value="S17913"/>
</dbReference>
<dbReference type="RefSeq" id="XP_015618940.1">
    <property type="nucleotide sequence ID" value="XM_015763454.1"/>
</dbReference>
<dbReference type="RefSeq" id="YP_002000567.1">
    <property type="nucleotide sequence ID" value="NC_011033.1"/>
</dbReference>
<dbReference type="SMR" id="P28520"/>
<dbReference type="FunCoup" id="P28520">
    <property type="interactions" value="870"/>
</dbReference>
<dbReference type="STRING" id="39947.P28520"/>
<dbReference type="PaxDb" id="39947-P28520"/>
<dbReference type="EnsemblPlants" id="transcript-rps12-2">
    <property type="protein sequence ID" value="cds-BAC19872.1"/>
    <property type="gene ID" value="gene-rps12-2"/>
</dbReference>
<dbReference type="GeneID" id="6450201"/>
<dbReference type="Gramene" id="transcript-rps12-2">
    <property type="protein sequence ID" value="cds-BAC19872.1"/>
    <property type="gene ID" value="gene-rps12-2"/>
</dbReference>
<dbReference type="KEGG" id="osa:107279592"/>
<dbReference type="KEGG" id="osa:6450201"/>
<dbReference type="InParanoid" id="P28520"/>
<dbReference type="OrthoDB" id="1875922at2759"/>
<dbReference type="Proteomes" id="UP000059680">
    <property type="component" value="Mitochondrion"/>
</dbReference>
<dbReference type="GO" id="GO:0005739">
    <property type="term" value="C:mitochondrion"/>
    <property type="evidence" value="ECO:0000250"/>
    <property type="project" value="Gramene"/>
</dbReference>
<dbReference type="GO" id="GO:0005840">
    <property type="term" value="C:ribosome"/>
    <property type="evidence" value="ECO:0000318"/>
    <property type="project" value="GO_Central"/>
</dbReference>
<dbReference type="GO" id="GO:0015935">
    <property type="term" value="C:small ribosomal subunit"/>
    <property type="evidence" value="ECO:0007669"/>
    <property type="project" value="InterPro"/>
</dbReference>
<dbReference type="GO" id="GO:0003735">
    <property type="term" value="F:structural constituent of ribosome"/>
    <property type="evidence" value="ECO:0000318"/>
    <property type="project" value="GO_Central"/>
</dbReference>
<dbReference type="GO" id="GO:0006412">
    <property type="term" value="P:translation"/>
    <property type="evidence" value="ECO:0000318"/>
    <property type="project" value="GO_Central"/>
</dbReference>
<dbReference type="CDD" id="cd03368">
    <property type="entry name" value="Ribosomal_S12"/>
    <property type="match status" value="1"/>
</dbReference>
<dbReference type="FunFam" id="2.40.50.140:FF:000099">
    <property type="entry name" value="Ribosomal protein S12, mitochondrial"/>
    <property type="match status" value="1"/>
</dbReference>
<dbReference type="Gene3D" id="2.40.50.140">
    <property type="entry name" value="Nucleic acid-binding proteins"/>
    <property type="match status" value="1"/>
</dbReference>
<dbReference type="HAMAP" id="MF_00403_B">
    <property type="entry name" value="Ribosomal_uS12_B"/>
    <property type="match status" value="1"/>
</dbReference>
<dbReference type="InterPro" id="IPR012340">
    <property type="entry name" value="NA-bd_OB-fold"/>
</dbReference>
<dbReference type="InterPro" id="IPR006032">
    <property type="entry name" value="Ribosomal_uS12"/>
</dbReference>
<dbReference type="InterPro" id="IPR005679">
    <property type="entry name" value="Ribosomal_uS12_bac"/>
</dbReference>
<dbReference type="NCBIfam" id="TIGR00981">
    <property type="entry name" value="rpsL_bact"/>
    <property type="match status" value="1"/>
</dbReference>
<dbReference type="PANTHER" id="PTHR11652">
    <property type="entry name" value="30S RIBOSOMAL PROTEIN S12 FAMILY MEMBER"/>
    <property type="match status" value="1"/>
</dbReference>
<dbReference type="Pfam" id="PF00164">
    <property type="entry name" value="Ribosom_S12_S23"/>
    <property type="match status" value="1"/>
</dbReference>
<dbReference type="PIRSF" id="PIRSF002133">
    <property type="entry name" value="Ribosomal_S12/S23"/>
    <property type="match status" value="1"/>
</dbReference>
<dbReference type="PRINTS" id="PR01034">
    <property type="entry name" value="RIBOSOMALS12"/>
</dbReference>
<dbReference type="SUPFAM" id="SSF50249">
    <property type="entry name" value="Nucleic acid-binding proteins"/>
    <property type="match status" value="1"/>
</dbReference>
<dbReference type="PROSITE" id="PS00055">
    <property type="entry name" value="RIBOSOMAL_S12"/>
    <property type="match status" value="1"/>
</dbReference>
<name>RT12_ORYSJ</name>
<protein>
    <recommendedName>
        <fullName evidence="2">Small ribosomal subunit protein uS12m</fullName>
    </recommendedName>
    <alternativeName>
        <fullName>Ribosomal protein S12, mitochondrial</fullName>
    </alternativeName>
</protein>
<organism>
    <name type="scientific">Oryza sativa subsp. japonica</name>
    <name type="common">Rice</name>
    <dbReference type="NCBI Taxonomy" id="39947"/>
    <lineage>
        <taxon>Eukaryota</taxon>
        <taxon>Viridiplantae</taxon>
        <taxon>Streptophyta</taxon>
        <taxon>Embryophyta</taxon>
        <taxon>Tracheophyta</taxon>
        <taxon>Spermatophyta</taxon>
        <taxon>Magnoliopsida</taxon>
        <taxon>Liliopsida</taxon>
        <taxon>Poales</taxon>
        <taxon>Poaceae</taxon>
        <taxon>BOP clade</taxon>
        <taxon>Oryzoideae</taxon>
        <taxon>Oryzeae</taxon>
        <taxon>Oryzinae</taxon>
        <taxon>Oryza</taxon>
        <taxon>Oryza sativa</taxon>
    </lineage>
</organism>
<comment type="function">
    <text>Protein S12 is involved in the translation initiation step.</text>
</comment>
<comment type="subcellular location">
    <subcellularLocation>
        <location>Mitochondrion</location>
    </subcellularLocation>
</comment>
<comment type="similarity">
    <text evidence="2">Belongs to the universal ribosomal protein uS12 family.</text>
</comment>
<geneLocation type="mitochondrion"/>
<feature type="chain" id="PRO_0000146443" description="Small ribosomal subunit protein uS12m">
    <location>
        <begin position="1"/>
        <end position="125"/>
    </location>
</feature>
<feature type="region of interest" description="Disordered" evidence="1">
    <location>
        <begin position="1"/>
        <end position="29"/>
    </location>
</feature>
<feature type="region of interest" description="Disordered" evidence="1">
    <location>
        <begin position="105"/>
        <end position="125"/>
    </location>
</feature>
<feature type="compositionally biased region" description="Basic and acidic residues" evidence="1">
    <location>
        <begin position="10"/>
        <end position="23"/>
    </location>
</feature>
<reference key="1">
    <citation type="journal article" date="1991" name="Curr. Genet.">
        <title>The rice mitochondrial nad3 gene has an extended reading frame at its 5' end: nucleotide sequence analysis of rice trnS, nad3, and rps12 genes.</title>
        <authorList>
            <person name="Suzuki T."/>
            <person name="Kazama S."/>
            <person name="Hirai A."/>
            <person name="Akihama T."/>
            <person name="Kadowaki K."/>
        </authorList>
    </citation>
    <scope>NUCLEOTIDE SEQUENCE [GENOMIC DNA]</scope>
    <source>
        <strain>cv. Taichung 65</strain>
    </source>
</reference>
<reference key="2">
    <citation type="journal article" date="1994" name="Plant Cell Physiol.">
        <title>Nucleotide sequence of a 28-kbp portion of rice mitochondrial DNA: the existence of many sequences that correspond to parts of mitochondrial genes in intergenic regions.</title>
        <authorList>
            <person name="Itadani H."/>
            <person name="Wakasugi T."/>
            <person name="Sugita M."/>
            <person name="Sugiura M."/>
            <person name="Nakazono M."/>
            <person name="Hirai A."/>
        </authorList>
    </citation>
    <scope>NUCLEOTIDE SEQUENCE [GENOMIC DNA]</scope>
    <source>
        <strain>cv. Nipponbare</strain>
    </source>
</reference>
<reference key="3">
    <citation type="journal article" date="1995" name="Curr. Genet.">
        <title>The rps3-rpl16-nad3-rps12 gene cluster in rice mitochondrial DNA is transcribed from alternative promoters.</title>
        <authorList>
            <person name="Nakazono M."/>
            <person name="Itadani H."/>
            <person name="Wakasugi T."/>
            <person name="Tsutsumi N."/>
            <person name="Sugiura M."/>
            <person name="Hirai A."/>
        </authorList>
    </citation>
    <scope>NUCLEOTIDE SEQUENCE [GENOMIC DNA]</scope>
    <source>
        <strain>cv. Nipponbare</strain>
    </source>
</reference>
<reference key="4">
    <citation type="journal article" date="2002" name="Mol. Genet. Genomics">
        <title>The complete sequence of the rice (Oryza sativa L.) mitochondrial genome: frequent DNA sequence acquisition and loss during the evolution of flowering plants.</title>
        <authorList>
            <person name="Notsu Y."/>
            <person name="Masood S."/>
            <person name="Nishikawa T."/>
            <person name="Kubo N."/>
            <person name="Akiduki G."/>
            <person name="Nakazono M."/>
            <person name="Hirai A."/>
            <person name="Kadowaki K."/>
        </authorList>
    </citation>
    <scope>NUCLEOTIDE SEQUENCE [LARGE SCALE GENOMIC DNA]</scope>
    <source>
        <strain>cv. Nipponbare</strain>
    </source>
</reference>
<sequence>MPTKNQLIRHGREEKQRTDRTRASDQCPQKQGVCLRVSTRTPKKPNSALRKIAKVRLSNRHDIFAHIPGEGHNSQEHSIVLVRGGRVKDSPGVKSHRIRGVKDLLGIPDRRKGRSKYGAERPKSK</sequence>
<proteinExistence type="inferred from homology"/>
<keyword id="KW-0496">Mitochondrion</keyword>
<keyword id="KW-1185">Reference proteome</keyword>
<keyword id="KW-0687">Ribonucleoprotein</keyword>
<keyword id="KW-0689">Ribosomal protein</keyword>
<accession>P28520</accession>
<evidence type="ECO:0000256" key="1">
    <source>
        <dbReference type="SAM" id="MobiDB-lite"/>
    </source>
</evidence>
<evidence type="ECO:0000305" key="2"/>